<accession>P85666</accession>
<keyword id="KW-0027">Amidation</keyword>
<keyword id="KW-0903">Direct protein sequencing</keyword>
<keyword id="KW-0527">Neuropeptide</keyword>
<keyword id="KW-0964">Secreted</keyword>
<reference evidence="4" key="1">
    <citation type="journal article" date="2009" name="BMC Evol. Biol.">
        <title>A proteomic approach for studying insect phylogeny: CAPA peptides of ancient insect taxa (Dictyoptera, Blattoptera) as a test case.</title>
        <authorList>
            <person name="Roth S."/>
            <person name="Fromm B."/>
            <person name="Gaede G."/>
            <person name="Predel R."/>
        </authorList>
    </citation>
    <scope>PROTEIN SEQUENCE</scope>
    <scope>AMIDATION AT THR-11</scope>
    <source>
        <tissue evidence="2">Abdominal perisympathetic organs</tissue>
    </source>
</reference>
<feature type="peptide" id="PRO_0000378750" description="Periviscerokinin-1" evidence="2">
    <location>
        <begin position="1"/>
        <end position="11"/>
    </location>
</feature>
<feature type="modified residue" description="Threonine amide" evidence="2">
    <location>
        <position position="11"/>
    </location>
</feature>
<organism>
    <name type="scientific">Lucihormetica subcincta</name>
    <name type="common">Glow spot roach</name>
    <dbReference type="NCBI Taxonomy" id="406666"/>
    <lineage>
        <taxon>Eukaryota</taxon>
        <taxon>Metazoa</taxon>
        <taxon>Ecdysozoa</taxon>
        <taxon>Arthropoda</taxon>
        <taxon>Hexapoda</taxon>
        <taxon>Insecta</taxon>
        <taxon>Pterygota</taxon>
        <taxon>Neoptera</taxon>
        <taxon>Polyneoptera</taxon>
        <taxon>Dictyoptera</taxon>
        <taxon>Blattodea</taxon>
        <taxon>Blaberoidea</taxon>
        <taxon>Blaberidae</taxon>
        <taxon>Blaberinae</taxon>
        <taxon>Lucihormetica</taxon>
    </lineage>
</organism>
<proteinExistence type="evidence at protein level"/>
<name>PVK1_LUCSU</name>
<sequence length="11" mass="1105">GSTGLIPFGRT</sequence>
<protein>
    <recommendedName>
        <fullName evidence="3">Periviscerokinin-1</fullName>
        <shortName evidence="3">LucSu-PVK-1</shortName>
    </recommendedName>
</protein>
<dbReference type="GO" id="GO:0005576">
    <property type="term" value="C:extracellular region"/>
    <property type="evidence" value="ECO:0007669"/>
    <property type="project" value="UniProtKB-SubCell"/>
</dbReference>
<dbReference type="GO" id="GO:0007218">
    <property type="term" value="P:neuropeptide signaling pathway"/>
    <property type="evidence" value="ECO:0007669"/>
    <property type="project" value="UniProtKB-KW"/>
</dbReference>
<dbReference type="InterPro" id="IPR013231">
    <property type="entry name" value="Periviscerokinin"/>
</dbReference>
<dbReference type="Pfam" id="PF08259">
    <property type="entry name" value="Periviscerokin"/>
    <property type="match status" value="1"/>
</dbReference>
<evidence type="ECO:0000255" key="1"/>
<evidence type="ECO:0000269" key="2">
    <source>
    </source>
</evidence>
<evidence type="ECO:0000303" key="3">
    <source>
    </source>
</evidence>
<evidence type="ECO:0000305" key="4"/>
<comment type="function">
    <text evidence="4">Mediates visceral muscle contractile activity (myotropic activity).</text>
</comment>
<comment type="subcellular location">
    <subcellularLocation>
        <location evidence="4">Secreted</location>
    </subcellularLocation>
</comment>
<comment type="similarity">
    <text evidence="1">Belongs to the periviscerokinin family.</text>
</comment>